<name>ACPS_MYCBT</name>
<proteinExistence type="inferred from homology"/>
<keyword id="KW-0963">Cytoplasm</keyword>
<keyword id="KW-0275">Fatty acid biosynthesis</keyword>
<keyword id="KW-0276">Fatty acid metabolism</keyword>
<keyword id="KW-0444">Lipid biosynthesis</keyword>
<keyword id="KW-0443">Lipid metabolism</keyword>
<keyword id="KW-0460">Magnesium</keyword>
<keyword id="KW-0479">Metal-binding</keyword>
<keyword id="KW-0808">Transferase</keyword>
<gene>
    <name evidence="1" type="primary">acpS</name>
    <name type="ordered locus">JTY_2538</name>
</gene>
<sequence length="130" mass="14003">MGIVGVGIDLVSIPDFAEQVDQPGTVFAETFTPGERRDASDKSSSAARHLAARWAAKEAVIKAWSGSRFAQRPVLPEDIHRDIEVVTDMWGRPRVRLTGAIAEYLADVTIHVSLTHEGDTAAAVAILEAP</sequence>
<evidence type="ECO:0000255" key="1">
    <source>
        <dbReference type="HAMAP-Rule" id="MF_00101"/>
    </source>
</evidence>
<reference key="1">
    <citation type="journal article" date="2009" name="Vaccine">
        <title>Whole genome sequence analysis of Mycobacterium bovis bacillus Calmette-Guerin (BCG) Tokyo 172: a comparative study of BCG vaccine substrains.</title>
        <authorList>
            <person name="Seki M."/>
            <person name="Honda I."/>
            <person name="Fujita I."/>
            <person name="Yano I."/>
            <person name="Yamamoto S."/>
            <person name="Koyama A."/>
        </authorList>
    </citation>
    <scope>NUCLEOTIDE SEQUENCE [LARGE SCALE GENOMIC DNA]</scope>
    <source>
        <strain>BCG / Tokyo 172 / ATCC 35737 / TMC 1019</strain>
    </source>
</reference>
<dbReference type="EC" id="2.7.8.7" evidence="1"/>
<dbReference type="EMBL" id="AP010918">
    <property type="protein sequence ID" value="BAH26819.1"/>
    <property type="molecule type" value="Genomic_DNA"/>
</dbReference>
<dbReference type="RefSeq" id="WP_003412952.1">
    <property type="nucleotide sequence ID" value="NZ_CP014566.1"/>
</dbReference>
<dbReference type="SMR" id="C1AEZ0"/>
<dbReference type="KEGG" id="mbt:JTY_2538"/>
<dbReference type="HOGENOM" id="CLU_089696_2_0_11"/>
<dbReference type="GO" id="GO:0005737">
    <property type="term" value="C:cytoplasm"/>
    <property type="evidence" value="ECO:0007669"/>
    <property type="project" value="UniProtKB-SubCell"/>
</dbReference>
<dbReference type="GO" id="GO:0008897">
    <property type="term" value="F:holo-[acyl-carrier-protein] synthase activity"/>
    <property type="evidence" value="ECO:0007669"/>
    <property type="project" value="UniProtKB-UniRule"/>
</dbReference>
<dbReference type="GO" id="GO:0000287">
    <property type="term" value="F:magnesium ion binding"/>
    <property type="evidence" value="ECO:0007669"/>
    <property type="project" value="UniProtKB-UniRule"/>
</dbReference>
<dbReference type="GO" id="GO:0006633">
    <property type="term" value="P:fatty acid biosynthetic process"/>
    <property type="evidence" value="ECO:0007669"/>
    <property type="project" value="UniProtKB-UniRule"/>
</dbReference>
<dbReference type="Gene3D" id="3.90.470.20">
    <property type="entry name" value="4'-phosphopantetheinyl transferase domain"/>
    <property type="match status" value="1"/>
</dbReference>
<dbReference type="HAMAP" id="MF_00101">
    <property type="entry name" value="AcpS"/>
    <property type="match status" value="1"/>
</dbReference>
<dbReference type="InterPro" id="IPR008278">
    <property type="entry name" value="4-PPantetheinyl_Trfase_dom"/>
</dbReference>
<dbReference type="InterPro" id="IPR037143">
    <property type="entry name" value="4-PPantetheinyl_Trfase_dom_sf"/>
</dbReference>
<dbReference type="InterPro" id="IPR002582">
    <property type="entry name" value="ACPS"/>
</dbReference>
<dbReference type="InterPro" id="IPR004568">
    <property type="entry name" value="Ppantetheine-prot_Trfase_dom"/>
</dbReference>
<dbReference type="NCBIfam" id="TIGR00556">
    <property type="entry name" value="pantethn_trn"/>
    <property type="match status" value="1"/>
</dbReference>
<dbReference type="NCBIfam" id="NF000831">
    <property type="entry name" value="PRK00070.3-1"/>
    <property type="match status" value="1"/>
</dbReference>
<dbReference type="Pfam" id="PF01648">
    <property type="entry name" value="ACPS"/>
    <property type="match status" value="1"/>
</dbReference>
<dbReference type="SUPFAM" id="SSF56214">
    <property type="entry name" value="4'-phosphopantetheinyl transferase"/>
    <property type="match status" value="1"/>
</dbReference>
<feature type="chain" id="PRO_1000118818" description="Holo-[acyl-carrier-protein] synthase">
    <location>
        <begin position="1"/>
        <end position="130"/>
    </location>
</feature>
<feature type="binding site" evidence="1">
    <location>
        <position position="9"/>
    </location>
    <ligand>
        <name>Mg(2+)</name>
        <dbReference type="ChEBI" id="CHEBI:18420"/>
    </ligand>
</feature>
<feature type="binding site" evidence="1">
    <location>
        <position position="58"/>
    </location>
    <ligand>
        <name>Mg(2+)</name>
        <dbReference type="ChEBI" id="CHEBI:18420"/>
    </ligand>
</feature>
<organism>
    <name type="scientific">Mycobacterium bovis (strain BCG / Tokyo 172 / ATCC 35737 / TMC 1019)</name>
    <dbReference type="NCBI Taxonomy" id="561275"/>
    <lineage>
        <taxon>Bacteria</taxon>
        <taxon>Bacillati</taxon>
        <taxon>Actinomycetota</taxon>
        <taxon>Actinomycetes</taxon>
        <taxon>Mycobacteriales</taxon>
        <taxon>Mycobacteriaceae</taxon>
        <taxon>Mycobacterium</taxon>
        <taxon>Mycobacterium tuberculosis complex</taxon>
    </lineage>
</organism>
<accession>C1AEZ0</accession>
<protein>
    <recommendedName>
        <fullName evidence="1">Holo-[acyl-carrier-protein] synthase</fullName>
        <shortName evidence="1">Holo-ACP synthase</shortName>
        <ecNumber evidence="1">2.7.8.7</ecNumber>
    </recommendedName>
    <alternativeName>
        <fullName evidence="1">4'-phosphopantetheinyl transferase AcpS</fullName>
    </alternativeName>
</protein>
<comment type="function">
    <text evidence="1">Transfers the 4'-phosphopantetheine moiety from coenzyme A to a Ser of acyl-carrier-protein.</text>
</comment>
<comment type="catalytic activity">
    <reaction evidence="1">
        <text>apo-[ACP] + CoA = holo-[ACP] + adenosine 3',5'-bisphosphate + H(+)</text>
        <dbReference type="Rhea" id="RHEA:12068"/>
        <dbReference type="Rhea" id="RHEA-COMP:9685"/>
        <dbReference type="Rhea" id="RHEA-COMP:9690"/>
        <dbReference type="ChEBI" id="CHEBI:15378"/>
        <dbReference type="ChEBI" id="CHEBI:29999"/>
        <dbReference type="ChEBI" id="CHEBI:57287"/>
        <dbReference type="ChEBI" id="CHEBI:58343"/>
        <dbReference type="ChEBI" id="CHEBI:64479"/>
        <dbReference type="EC" id="2.7.8.7"/>
    </reaction>
</comment>
<comment type="cofactor">
    <cofactor evidence="1">
        <name>Mg(2+)</name>
        <dbReference type="ChEBI" id="CHEBI:18420"/>
    </cofactor>
</comment>
<comment type="subcellular location">
    <subcellularLocation>
        <location evidence="1">Cytoplasm</location>
    </subcellularLocation>
</comment>
<comment type="similarity">
    <text evidence="1">Belongs to the P-Pant transferase superfamily. AcpS family.</text>
</comment>